<comment type="function">
    <text evidence="8 9 10">Receptor for the cytotoxic ligand TRAIL (PubMed:9430226). Contains a truncated death domain and hence is not capable of inducing apoptosis but protects against TRAIL-mediated apoptosis (PubMed:9537512). Reports are contradictory with regards to its ability to induce the NF-kappa-B pathway. According to PubMed:9382840, it cannot but according to PubMed:9430226, it can induce the NF-kappa-B pathway (PubMed:9382840, PubMed:9430226).</text>
</comment>
<comment type="interaction">
    <interactant intactId="EBI-1044859">
        <id>Q9UBN6</id>
    </interactant>
    <interactant intactId="EBI-11976321">
        <id>O95236-2</id>
        <label>APOL3</label>
    </interactant>
    <organismsDiffer>false</organismsDiffer>
    <experiments>3</experiments>
</comment>
<comment type="interaction">
    <interactant intactId="EBI-1044859">
        <id>Q9UBN6</id>
    </interactant>
    <interactant intactId="EBI-2808808">
        <id>P53367</id>
        <label>ARFIP1</label>
    </interactant>
    <organismsDiffer>false</organismsDiffer>
    <experiments>3</experiments>
</comment>
<comment type="interaction">
    <interactant intactId="EBI-1044859">
        <id>Q9UBN6</id>
    </interactant>
    <interactant intactId="EBI-752069">
        <id>Q9H5X1</id>
        <label>CIAO2A</label>
    </interactant>
    <organismsDiffer>false</organismsDiffer>
    <experiments>3</experiments>
</comment>
<comment type="interaction">
    <interactant intactId="EBI-1044859">
        <id>Q9UBN6</id>
    </interactant>
    <interactant intactId="EBI-521451">
        <id>Q5VYK3</id>
        <label>ECPAS</label>
    </interactant>
    <organismsDiffer>false</organismsDiffer>
    <experiments>3</experiments>
</comment>
<comment type="interaction">
    <interactant intactId="EBI-1044859">
        <id>Q9UBN6</id>
    </interactant>
    <interactant intactId="EBI-2686288">
        <id>Q8IWE2</id>
        <label>FAM114A1</label>
    </interactant>
    <organismsDiffer>false</organismsDiffer>
    <experiments>3</experiments>
</comment>
<comment type="interaction">
    <interactant intactId="EBI-1044859">
        <id>Q9UBN6</id>
    </interactant>
    <interactant intactId="EBI-9304251">
        <id>Q05329</id>
        <label>GAD2</label>
    </interactant>
    <organismsDiffer>false</organismsDiffer>
    <experiments>3</experiments>
</comment>
<comment type="interaction">
    <interactant intactId="EBI-1044859">
        <id>Q9UBN6</id>
    </interactant>
    <interactant intactId="EBI-2685549">
        <id>C9JCN9</id>
        <label>HSBP1L1</label>
    </interactant>
    <organismsDiffer>false</organismsDiffer>
    <experiments>3</experiments>
</comment>
<comment type="interaction">
    <interactant intactId="EBI-1044859">
        <id>Q9UBN6</id>
    </interactant>
    <interactant intactId="EBI-749162">
        <id>Q9BT40</id>
        <label>INPP5K</label>
    </interactant>
    <organismsDiffer>false</organismsDiffer>
    <experiments>3</experiments>
</comment>
<comment type="interaction">
    <interactant intactId="EBI-1044859">
        <id>Q9UBN6</id>
    </interactant>
    <interactant intactId="EBI-8070286">
        <id>O43561-2</id>
        <label>LAT</label>
    </interactant>
    <organismsDiffer>false</organismsDiffer>
    <experiments>3</experiments>
</comment>
<comment type="interaction">
    <interactant intactId="EBI-1044859">
        <id>Q9UBN6</id>
    </interactant>
    <interactant intactId="EBI-740987">
        <id>Q9NQG6</id>
        <label>MIEF1</label>
    </interactant>
    <organismsDiffer>false</organismsDiffer>
    <experiments>3</experiments>
</comment>
<comment type="interaction">
    <interactant intactId="EBI-1044859">
        <id>Q9UBN6</id>
    </interactant>
    <interactant intactId="EBI-948435">
        <id>Q7Z6M4</id>
        <label>MTERF4</label>
    </interactant>
    <organismsDiffer>false</organismsDiffer>
    <experiments>3</experiments>
</comment>
<comment type="interaction">
    <interactant intactId="EBI-1044859">
        <id>Q9UBN6</id>
    </interactant>
    <interactant intactId="EBI-2563309">
        <id>P49585</id>
        <label>PCYT1A</label>
    </interactant>
    <organismsDiffer>false</organismsDiffer>
    <experiments>3</experiments>
</comment>
<comment type="interaction">
    <interactant intactId="EBI-1044859">
        <id>Q9UBN6</id>
    </interactant>
    <interactant intactId="EBI-14223623">
        <id>Q9UKF7-2</id>
        <label>PITPNC1</label>
    </interactant>
    <organismsDiffer>false</organismsDiffer>
    <experiments>3</experiments>
</comment>
<comment type="interaction">
    <interactant intactId="EBI-1044859">
        <id>Q9UBN6</id>
    </interactant>
    <interactant intactId="EBI-11721828">
        <id>Q8IY26</id>
        <label>PLPP6</label>
    </interactant>
    <organismsDiffer>false</organismsDiffer>
    <experiments>3</experiments>
</comment>
<comment type="interaction">
    <interactant intactId="EBI-1044859">
        <id>Q9UBN6</id>
    </interactant>
    <interactant intactId="EBI-10320765">
        <id>Q9UGP5-2</id>
        <label>POLL</label>
    </interactant>
    <organismsDiffer>false</organismsDiffer>
    <experiments>3</experiments>
</comment>
<comment type="interaction">
    <interactant intactId="EBI-1044859">
        <id>Q9UBN6</id>
    </interactant>
    <interactant intactId="EBI-2623483">
        <id>P09455</id>
        <label>RBP1</label>
    </interactant>
    <organismsDiffer>false</organismsDiffer>
    <experiments>3</experiments>
</comment>
<comment type="interaction">
    <interactant intactId="EBI-1044859">
        <id>Q9UBN6</id>
    </interactant>
    <interactant intactId="EBI-2806908">
        <id>Q96LZ7</id>
        <label>RMDN2</label>
    </interactant>
    <organismsDiffer>false</organismsDiffer>
    <experiments>3</experiments>
</comment>
<comment type="interaction">
    <interactant intactId="EBI-1044859">
        <id>Q9UBN6</id>
    </interactant>
    <interactant intactId="EBI-12913124">
        <id>Q9NTN9-2</id>
        <label>SEMA4G</label>
    </interactant>
    <organismsDiffer>false</organismsDiffer>
    <experiments>3</experiments>
</comment>
<comment type="interaction">
    <interactant intactId="EBI-1044859">
        <id>Q9UBN6</id>
    </interactant>
    <interactant intactId="EBI-714881">
        <id>Q9HC62</id>
        <label>SENP2</label>
    </interactant>
    <organismsDiffer>false</organismsDiffer>
    <experiments>3</experiments>
</comment>
<comment type="interaction">
    <interactant intactId="EBI-1044859">
        <id>Q9UBN6</id>
    </interactant>
    <interactant intactId="EBI-1051105">
        <id>Q92504</id>
        <label>SLC39A7</label>
    </interactant>
    <organismsDiffer>false</organismsDiffer>
    <experiments>3</experiments>
</comment>
<comment type="interaction">
    <interactant intactId="EBI-1044859">
        <id>Q9UBN6</id>
    </interactant>
    <interactant intactId="EBI-2269898">
        <id>Q9P2R7</id>
        <label>SUCLA2</label>
    </interactant>
    <organismsDiffer>false</organismsDiffer>
    <experiments>3</experiments>
</comment>
<comment type="interaction">
    <interactant intactId="EBI-1044859">
        <id>Q9UBN6</id>
    </interactant>
    <interactant intactId="EBI-1045099">
        <id>Q9BW92</id>
        <label>TARS2</label>
    </interactant>
    <organismsDiffer>false</organismsDiffer>
    <experiments>3</experiments>
</comment>
<comment type="interaction">
    <interactant intactId="EBI-1044859">
        <id>Q9UBN6</id>
    </interactant>
    <interactant intactId="EBI-702328">
        <id>Q969Z0</id>
        <label>TBRG4</label>
    </interactant>
    <organismsDiffer>false</organismsDiffer>
    <experiments>3</experiments>
</comment>
<comment type="interaction">
    <interactant intactId="EBI-1044859">
        <id>Q9UBN6</id>
    </interactant>
    <interactant intactId="EBI-726691">
        <id>Q8WY91</id>
        <label>THAP4</label>
    </interactant>
    <organismsDiffer>false</organismsDiffer>
    <experiments>3</experiments>
</comment>
<comment type="interaction">
    <interactant intactId="EBI-1044859">
        <id>Q9UBN6</id>
    </interactant>
    <interactant intactId="EBI-12261790">
        <id>A0A384ME17</id>
        <label>TUFM</label>
    </interactant>
    <organismsDiffer>false</organismsDiffer>
    <experiments>3</experiments>
</comment>
<comment type="subcellular location">
    <subcellularLocation>
        <location evidence="1">Membrane</location>
        <topology evidence="1">Single-pass type I membrane protein</topology>
    </subcellularLocation>
</comment>
<comment type="tissue specificity">
    <text evidence="9">Widely expressed, in particular in fetal kidney, lung and liver, and in adult testis and liver. Also expressed in peripheral blood leukocytes, colon and small intestine, ovary, prostate, thymus, spleen, pancreas, kidney, lung, placenta and heart.</text>
</comment>
<keyword id="KW-0053">Apoptosis</keyword>
<keyword id="KW-0903">Direct protein sequencing</keyword>
<keyword id="KW-1015">Disulfide bond</keyword>
<keyword id="KW-0325">Glycoprotein</keyword>
<keyword id="KW-0472">Membrane</keyword>
<keyword id="KW-1267">Proteomics identification</keyword>
<keyword id="KW-0675">Receptor</keyword>
<keyword id="KW-1185">Reference proteome</keyword>
<keyword id="KW-0677">Repeat</keyword>
<keyword id="KW-0732">Signal</keyword>
<keyword id="KW-0812">Transmembrane</keyword>
<keyword id="KW-1133">Transmembrane helix</keyword>
<dbReference type="EMBL" id="AF029761">
    <property type="protein sequence ID" value="AAD03477.1"/>
    <property type="molecule type" value="mRNA"/>
</dbReference>
<dbReference type="EMBL" id="AF021232">
    <property type="protein sequence ID" value="AAC32765.1"/>
    <property type="molecule type" value="mRNA"/>
</dbReference>
<dbReference type="EMBL" id="AF021233">
    <property type="protein sequence ID" value="AAC32766.1"/>
    <property type="molecule type" value="mRNA"/>
</dbReference>
<dbReference type="EMBL" id="AF023849">
    <property type="protein sequence ID" value="AAC52053.1"/>
    <property type="molecule type" value="mRNA"/>
</dbReference>
<dbReference type="EMBL" id="AY358285">
    <property type="protein sequence ID" value="AAQ88652.1"/>
    <property type="molecule type" value="mRNA"/>
</dbReference>
<dbReference type="EMBL" id="AK313528">
    <property type="protein sequence ID" value="BAG36307.1"/>
    <property type="molecule type" value="mRNA"/>
</dbReference>
<dbReference type="EMBL" id="BC052270">
    <property type="protein sequence ID" value="AAH52270.1"/>
    <property type="molecule type" value="mRNA"/>
</dbReference>
<dbReference type="CCDS" id="CCDS6038.1"/>
<dbReference type="RefSeq" id="NP_003831.2">
    <property type="nucleotide sequence ID" value="NM_003840.4"/>
</dbReference>
<dbReference type="SMR" id="Q9UBN6"/>
<dbReference type="BioGRID" id="114321">
    <property type="interactions" value="45"/>
</dbReference>
<dbReference type="DIP" id="DIP-6231N"/>
<dbReference type="FunCoup" id="Q9UBN6">
    <property type="interactions" value="523"/>
</dbReference>
<dbReference type="IntAct" id="Q9UBN6">
    <property type="interactions" value="41"/>
</dbReference>
<dbReference type="MINT" id="Q9UBN6"/>
<dbReference type="STRING" id="9606.ENSP00000310263"/>
<dbReference type="GlyCosmos" id="Q9UBN6">
    <property type="glycosylation" value="2 sites, No reported glycans"/>
</dbReference>
<dbReference type="GlyGen" id="Q9UBN6">
    <property type="glycosylation" value="3 sites, 1 O-linked glycan (1 site)"/>
</dbReference>
<dbReference type="iPTMnet" id="Q9UBN6"/>
<dbReference type="PhosphoSitePlus" id="Q9UBN6"/>
<dbReference type="SwissPalm" id="Q9UBN6"/>
<dbReference type="BioMuta" id="TNFRSF10D"/>
<dbReference type="DMDM" id="18203495"/>
<dbReference type="jPOST" id="Q9UBN6"/>
<dbReference type="MassIVE" id="Q9UBN6"/>
<dbReference type="PaxDb" id="9606-ENSP00000310263"/>
<dbReference type="PeptideAtlas" id="Q9UBN6"/>
<dbReference type="ProteomicsDB" id="84018"/>
<dbReference type="Antibodypedia" id="9716">
    <property type="antibodies" value="792 antibodies from 42 providers"/>
</dbReference>
<dbReference type="DNASU" id="8793"/>
<dbReference type="Ensembl" id="ENST00000312584.4">
    <property type="protein sequence ID" value="ENSP00000310263.3"/>
    <property type="gene ID" value="ENSG00000173530.6"/>
</dbReference>
<dbReference type="GeneID" id="8793"/>
<dbReference type="KEGG" id="hsa:8793"/>
<dbReference type="MANE-Select" id="ENST00000312584.4">
    <property type="protein sequence ID" value="ENSP00000310263.3"/>
    <property type="RefSeq nucleotide sequence ID" value="NM_003840.5"/>
    <property type="RefSeq protein sequence ID" value="NP_003831.2"/>
</dbReference>
<dbReference type="UCSC" id="uc003xcz.4">
    <property type="organism name" value="human"/>
</dbReference>
<dbReference type="AGR" id="HGNC:11907"/>
<dbReference type="CTD" id="8793"/>
<dbReference type="DisGeNET" id="8793"/>
<dbReference type="GeneCards" id="TNFRSF10D"/>
<dbReference type="HGNC" id="HGNC:11907">
    <property type="gene designation" value="TNFRSF10D"/>
</dbReference>
<dbReference type="HPA" id="ENSG00000173530">
    <property type="expression patterns" value="Low tissue specificity"/>
</dbReference>
<dbReference type="MIM" id="603614">
    <property type="type" value="gene"/>
</dbReference>
<dbReference type="neXtProt" id="NX_Q9UBN6"/>
<dbReference type="OpenTargets" id="ENSG00000173530"/>
<dbReference type="PharmGKB" id="PA36600"/>
<dbReference type="VEuPathDB" id="HostDB:ENSG00000173530"/>
<dbReference type="eggNOG" id="ENOG502RBEC">
    <property type="taxonomic scope" value="Eukaryota"/>
</dbReference>
<dbReference type="GeneTree" id="ENSGT00940000164831"/>
<dbReference type="HOGENOM" id="CLU_038161_0_0_1"/>
<dbReference type="InParanoid" id="Q9UBN6"/>
<dbReference type="OMA" id="KNSPEMC"/>
<dbReference type="OrthoDB" id="9417953at2759"/>
<dbReference type="PAN-GO" id="Q9UBN6">
    <property type="GO annotations" value="2 GO annotations based on evolutionary models"/>
</dbReference>
<dbReference type="PhylomeDB" id="Q9UBN6"/>
<dbReference type="TreeFam" id="TF333916"/>
<dbReference type="PathwayCommons" id="Q9UBN6"/>
<dbReference type="Reactome" id="R-HSA-202733">
    <property type="pathway name" value="Cell surface interactions at the vascular wall"/>
</dbReference>
<dbReference type="Reactome" id="R-HSA-6803211">
    <property type="pathway name" value="TP53 Regulates Transcription of Death Receptors and Ligands"/>
</dbReference>
<dbReference type="Reactome" id="R-HSA-75158">
    <property type="pathway name" value="TRAIL signaling"/>
</dbReference>
<dbReference type="SignaLink" id="Q9UBN6"/>
<dbReference type="SIGNOR" id="Q9UBN6"/>
<dbReference type="BioGRID-ORCS" id="8793">
    <property type="hits" value="10 hits in 1151 CRISPR screens"/>
</dbReference>
<dbReference type="ChiTaRS" id="TNFRSF10D">
    <property type="organism name" value="human"/>
</dbReference>
<dbReference type="GeneWiki" id="TNFRSF10D"/>
<dbReference type="GenomeRNAi" id="8793"/>
<dbReference type="Pharos" id="Q9UBN6">
    <property type="development level" value="Tbio"/>
</dbReference>
<dbReference type="PRO" id="PR:Q9UBN6"/>
<dbReference type="Proteomes" id="UP000005640">
    <property type="component" value="Chromosome 8"/>
</dbReference>
<dbReference type="RNAct" id="Q9UBN6">
    <property type="molecule type" value="protein"/>
</dbReference>
<dbReference type="Bgee" id="ENSG00000173530">
    <property type="expression patterns" value="Expressed in cartilage tissue and 147 other cell types or tissues"/>
</dbReference>
<dbReference type="GO" id="GO:0009986">
    <property type="term" value="C:cell surface"/>
    <property type="evidence" value="ECO:0000318"/>
    <property type="project" value="GO_Central"/>
</dbReference>
<dbReference type="GO" id="GO:0005886">
    <property type="term" value="C:plasma membrane"/>
    <property type="evidence" value="ECO:0000318"/>
    <property type="project" value="GO_Central"/>
</dbReference>
<dbReference type="GO" id="GO:0045569">
    <property type="term" value="F:TRAIL binding"/>
    <property type="evidence" value="ECO:0007669"/>
    <property type="project" value="InterPro"/>
</dbReference>
<dbReference type="GO" id="GO:0004888">
    <property type="term" value="F:transmembrane signaling receptor activity"/>
    <property type="evidence" value="ECO:0000304"/>
    <property type="project" value="ProtInc"/>
</dbReference>
<dbReference type="GO" id="GO:0006915">
    <property type="term" value="P:apoptotic process"/>
    <property type="evidence" value="ECO:0007669"/>
    <property type="project" value="UniProtKB-KW"/>
</dbReference>
<dbReference type="GO" id="GO:0043066">
    <property type="term" value="P:negative regulation of apoptotic process"/>
    <property type="evidence" value="ECO:0000304"/>
    <property type="project" value="ProtInc"/>
</dbReference>
<dbReference type="GO" id="GO:0007165">
    <property type="term" value="P:signal transduction"/>
    <property type="evidence" value="ECO:0000304"/>
    <property type="project" value="ProtInc"/>
</dbReference>
<dbReference type="CDD" id="cd10580">
    <property type="entry name" value="TNFRSF10"/>
    <property type="match status" value="1"/>
</dbReference>
<dbReference type="FunFam" id="2.10.50.10:FF:000016">
    <property type="entry name" value="Tumor necrosis factor receptor superfamily member 10B"/>
    <property type="match status" value="1"/>
</dbReference>
<dbReference type="FunFam" id="2.10.50.10:FF:000004">
    <property type="entry name" value="Tumor necrosis factor receptor superfamily member 6"/>
    <property type="match status" value="1"/>
</dbReference>
<dbReference type="Gene3D" id="2.10.50.10">
    <property type="entry name" value="Tumor Necrosis Factor Receptor, subunit A, domain 2"/>
    <property type="match status" value="3"/>
</dbReference>
<dbReference type="InterPro" id="IPR001368">
    <property type="entry name" value="TNFR/NGFR_Cys_rich_reg"/>
</dbReference>
<dbReference type="InterPro" id="IPR020465">
    <property type="entry name" value="TNFR_10"/>
</dbReference>
<dbReference type="InterPro" id="IPR052491">
    <property type="entry name" value="TNFRSF10"/>
</dbReference>
<dbReference type="InterPro" id="IPR034024">
    <property type="entry name" value="TNFRSF10_N"/>
</dbReference>
<dbReference type="PANTHER" id="PTHR46330">
    <property type="entry name" value="TUMOR NECROSIS FACTOR RECEPTOR SUPERFAMILY MEMBER 10B"/>
    <property type="match status" value="1"/>
</dbReference>
<dbReference type="PANTHER" id="PTHR46330:SF10">
    <property type="entry name" value="TUMOR NECROSIS FACTOR RECEPTOR SUPERFAMILY MEMBER 10D"/>
    <property type="match status" value="1"/>
</dbReference>
<dbReference type="Pfam" id="PF00020">
    <property type="entry name" value="TNFR_c6"/>
    <property type="match status" value="2"/>
</dbReference>
<dbReference type="PRINTS" id="PR01956">
    <property type="entry name" value="TNFACTORR10"/>
</dbReference>
<dbReference type="SMART" id="SM00208">
    <property type="entry name" value="TNFR"/>
    <property type="match status" value="2"/>
</dbReference>
<dbReference type="SUPFAM" id="SSF57586">
    <property type="entry name" value="TNF receptor-like"/>
    <property type="match status" value="3"/>
</dbReference>
<dbReference type="PROSITE" id="PS00652">
    <property type="entry name" value="TNFR_NGFR_1"/>
    <property type="match status" value="2"/>
</dbReference>
<dbReference type="PROSITE" id="PS50050">
    <property type="entry name" value="TNFR_NGFR_2"/>
    <property type="match status" value="2"/>
</dbReference>
<name>TR10D_HUMAN</name>
<feature type="signal peptide" evidence="6 8">
    <location>
        <begin position="1"/>
        <end position="55"/>
    </location>
</feature>
<feature type="chain" id="PRO_0000034584" description="Tumor necrosis factor receptor superfamily member 10D">
    <location>
        <begin position="56"/>
        <end position="386"/>
    </location>
</feature>
<feature type="topological domain" description="Extracellular" evidence="1">
    <location>
        <begin position="56"/>
        <end position="211"/>
    </location>
</feature>
<feature type="transmembrane region" description="Helical" evidence="1">
    <location>
        <begin position="212"/>
        <end position="232"/>
    </location>
</feature>
<feature type="topological domain" description="Cytoplasmic" evidence="1">
    <location>
        <begin position="233"/>
        <end position="386"/>
    </location>
</feature>
<feature type="repeat" description="TNFR-Cys 1">
    <location>
        <begin position="58"/>
        <end position="97"/>
    </location>
</feature>
<feature type="repeat" description="TNFR-Cys 2">
    <location>
        <begin position="98"/>
        <end position="139"/>
    </location>
</feature>
<feature type="repeat" description="TNFR-Cys 3">
    <location>
        <begin position="140"/>
        <end position="180"/>
    </location>
</feature>
<feature type="domain" description="Death; truncated">
    <location>
        <begin position="340"/>
        <end position="366"/>
    </location>
</feature>
<feature type="region of interest" description="Disordered" evidence="3">
    <location>
        <begin position="1"/>
        <end position="25"/>
    </location>
</feature>
<feature type="region of interest" description="Disordered" evidence="3">
    <location>
        <begin position="62"/>
        <end position="90"/>
    </location>
</feature>
<feature type="compositionally biased region" description="Polar residues" evidence="3">
    <location>
        <begin position="64"/>
        <end position="75"/>
    </location>
</feature>
<feature type="glycosylation site" description="N-linked (GlcNAc...) asparagine" evidence="1">
    <location>
        <position position="127"/>
    </location>
</feature>
<feature type="glycosylation site" description="N-linked (GlcNAc...) asparagine" evidence="1">
    <location>
        <position position="182"/>
    </location>
</feature>
<feature type="disulfide bond" evidence="2">
    <location>
        <begin position="83"/>
        <end position="96"/>
    </location>
</feature>
<feature type="disulfide bond" evidence="2">
    <location>
        <begin position="99"/>
        <end position="115"/>
    </location>
</feature>
<feature type="disulfide bond" evidence="2">
    <location>
        <begin position="118"/>
        <end position="131"/>
    </location>
</feature>
<feature type="disulfide bond" evidence="2">
    <location>
        <begin position="121"/>
        <end position="139"/>
    </location>
</feature>
<feature type="disulfide bond" evidence="2">
    <location>
        <begin position="141"/>
        <end position="155"/>
    </location>
</feature>
<feature type="disulfide bond" evidence="2">
    <location>
        <begin position="158"/>
        <end position="172"/>
    </location>
</feature>
<feature type="disulfide bond" evidence="2">
    <location>
        <begin position="162"/>
        <end position="180"/>
    </location>
</feature>
<feature type="sequence variant" id="VAR_011417" description="In dbSNP:rs11135703." evidence="9">
    <original>P</original>
    <variation>S</variation>
    <location>
        <position position="35"/>
    </location>
</feature>
<feature type="sequence variant" id="VAR_061854" description="In dbSNP:rs55636833.">
    <original>R</original>
    <variation>H</variation>
    <location>
        <position position="276"/>
    </location>
</feature>
<feature type="sequence variant" id="VAR_011418" description="In dbSNP:rs1133782." evidence="4 5 7 8 9 10">
    <original>L</original>
    <variation>S</variation>
    <location>
        <position position="310"/>
    </location>
</feature>
<feature type="sequence variant" id="VAR_057288" description="In dbSNP:rs34622674.">
    <original>T</original>
    <variation>P</variation>
    <location>
        <position position="345"/>
    </location>
</feature>
<organism>
    <name type="scientific">Homo sapiens</name>
    <name type="common">Human</name>
    <dbReference type="NCBI Taxonomy" id="9606"/>
    <lineage>
        <taxon>Eukaryota</taxon>
        <taxon>Metazoa</taxon>
        <taxon>Chordata</taxon>
        <taxon>Craniata</taxon>
        <taxon>Vertebrata</taxon>
        <taxon>Euteleostomi</taxon>
        <taxon>Mammalia</taxon>
        <taxon>Eutheria</taxon>
        <taxon>Euarchontoglires</taxon>
        <taxon>Primates</taxon>
        <taxon>Haplorrhini</taxon>
        <taxon>Catarrhini</taxon>
        <taxon>Hominidae</taxon>
        <taxon>Homo</taxon>
    </lineage>
</organism>
<gene>
    <name evidence="13" type="primary">TNFRSF10D</name>
    <name type="synonym">DCR2</name>
    <name type="synonym">TRAILR4</name>
    <name evidence="12" type="synonym">TRUNDD</name>
    <name type="ORF">UNQ251/PRO288</name>
</gene>
<proteinExistence type="evidence at protein level"/>
<reference key="1">
    <citation type="journal article" date="1997" name="Curr. Biol.">
        <title>A novel receptor for Apo2L/TRAIL contains a truncated death domain.</title>
        <authorList>
            <person name="Marsters S.A."/>
            <person name="Sheridan J.P."/>
            <person name="Pitti R.M."/>
            <person name="Huang A."/>
            <person name="Skubatch M."/>
            <person name="Baldwin D."/>
            <person name="Yuan J."/>
            <person name="Gurney A."/>
            <person name="Goddard A.D."/>
            <person name="Godowski P."/>
            <person name="Ashkenazi A."/>
        </authorList>
    </citation>
    <scope>NUCLEOTIDE SEQUENCE [MRNA]</scope>
    <scope>PROTEIN SEQUENCE OF N-TERMINUS</scope>
    <scope>VARIANT SER-310</scope>
    <source>
        <tissue>Fetal lung</tissue>
    </source>
</reference>
<reference key="2">
    <citation type="journal article" date="1997" name="Immunity">
        <title>The novel receptor TRAIL-R4 induces NF-kappaB and protects against TRAIL-mediated apoptosis, yet retains an incomplete death domain.</title>
        <authorList>
            <person name="Degli-Esposti M.A."/>
            <person name="Dougall W.C."/>
            <person name="Smolak P.J."/>
            <person name="Waugh J.Y."/>
            <person name="Smith C.A."/>
            <person name="Goodwin R.G."/>
        </authorList>
    </citation>
    <scope>NUCLEOTIDE SEQUENCE [MRNA]</scope>
    <scope>CHARACTERIZATION</scope>
    <scope>VARIANTS SER-35 AND SER-310</scope>
    <scope>FUNCTION</scope>
    <scope>TISSUE SPECIFICITY</scope>
    <source>
        <tissue>Foreskin fibroblast</tissue>
        <tissue>Peripheral blood lymphocyte</tissue>
    </source>
</reference>
<reference key="3">
    <citation type="journal article" date="1998" name="FEBS Lett.">
        <title>TRUNDD, a new member of the TRAIL receptor family that antagonizes TRAIL signalling.</title>
        <authorList>
            <person name="Pan G."/>
            <person name="Ni J."/>
            <person name="Yu G.-L."/>
            <person name="Wei Y.-F."/>
            <person name="Dixit V.M."/>
        </authorList>
    </citation>
    <scope>NUCLEOTIDE SEQUENCE [MRNA]</scope>
    <scope>CHARACTERIZATION</scope>
    <scope>FUNCTION</scope>
    <scope>VARIANT SER-310</scope>
</reference>
<reference key="4">
    <citation type="journal article" date="2003" name="Genome Res.">
        <title>The secreted protein discovery initiative (SPDI), a large-scale effort to identify novel human secreted and transmembrane proteins: a bioinformatics assessment.</title>
        <authorList>
            <person name="Clark H.F."/>
            <person name="Gurney A.L."/>
            <person name="Abaya E."/>
            <person name="Baker K."/>
            <person name="Baldwin D.T."/>
            <person name="Brush J."/>
            <person name="Chen J."/>
            <person name="Chow B."/>
            <person name="Chui C."/>
            <person name="Crowley C."/>
            <person name="Currell B."/>
            <person name="Deuel B."/>
            <person name="Dowd P."/>
            <person name="Eaton D."/>
            <person name="Foster J.S."/>
            <person name="Grimaldi C."/>
            <person name="Gu Q."/>
            <person name="Hass P.E."/>
            <person name="Heldens S."/>
            <person name="Huang A."/>
            <person name="Kim H.S."/>
            <person name="Klimowski L."/>
            <person name="Jin Y."/>
            <person name="Johnson S."/>
            <person name="Lee J."/>
            <person name="Lewis L."/>
            <person name="Liao D."/>
            <person name="Mark M.R."/>
            <person name="Robbie E."/>
            <person name="Sanchez C."/>
            <person name="Schoenfeld J."/>
            <person name="Seshagiri S."/>
            <person name="Simmons L."/>
            <person name="Singh J."/>
            <person name="Smith V."/>
            <person name="Stinson J."/>
            <person name="Vagts A."/>
            <person name="Vandlen R.L."/>
            <person name="Watanabe C."/>
            <person name="Wieand D."/>
            <person name="Woods K."/>
            <person name="Xie M.-H."/>
            <person name="Yansura D.G."/>
            <person name="Yi S."/>
            <person name="Yu G."/>
            <person name="Yuan J."/>
            <person name="Zhang M."/>
            <person name="Zhang Z."/>
            <person name="Goddard A.D."/>
            <person name="Wood W.I."/>
            <person name="Godowski P.J."/>
            <person name="Gray A.M."/>
        </authorList>
    </citation>
    <scope>NUCLEOTIDE SEQUENCE [LARGE SCALE MRNA]</scope>
    <scope>VARIANT SER-310</scope>
</reference>
<reference key="5">
    <citation type="journal article" date="2004" name="Nat. Genet.">
        <title>Complete sequencing and characterization of 21,243 full-length human cDNAs.</title>
        <authorList>
            <person name="Ota T."/>
            <person name="Suzuki Y."/>
            <person name="Nishikawa T."/>
            <person name="Otsuki T."/>
            <person name="Sugiyama T."/>
            <person name="Irie R."/>
            <person name="Wakamatsu A."/>
            <person name="Hayashi K."/>
            <person name="Sato H."/>
            <person name="Nagai K."/>
            <person name="Kimura K."/>
            <person name="Makita H."/>
            <person name="Sekine M."/>
            <person name="Obayashi M."/>
            <person name="Nishi T."/>
            <person name="Shibahara T."/>
            <person name="Tanaka T."/>
            <person name="Ishii S."/>
            <person name="Yamamoto J."/>
            <person name="Saito K."/>
            <person name="Kawai Y."/>
            <person name="Isono Y."/>
            <person name="Nakamura Y."/>
            <person name="Nagahari K."/>
            <person name="Murakami K."/>
            <person name="Yasuda T."/>
            <person name="Iwayanagi T."/>
            <person name="Wagatsuma M."/>
            <person name="Shiratori A."/>
            <person name="Sudo H."/>
            <person name="Hosoiri T."/>
            <person name="Kaku Y."/>
            <person name="Kodaira H."/>
            <person name="Kondo H."/>
            <person name="Sugawara M."/>
            <person name="Takahashi M."/>
            <person name="Kanda K."/>
            <person name="Yokoi T."/>
            <person name="Furuya T."/>
            <person name="Kikkawa E."/>
            <person name="Omura Y."/>
            <person name="Abe K."/>
            <person name="Kamihara K."/>
            <person name="Katsuta N."/>
            <person name="Sato K."/>
            <person name="Tanikawa M."/>
            <person name="Yamazaki M."/>
            <person name="Ninomiya K."/>
            <person name="Ishibashi T."/>
            <person name="Yamashita H."/>
            <person name="Murakawa K."/>
            <person name="Fujimori K."/>
            <person name="Tanai H."/>
            <person name="Kimata M."/>
            <person name="Watanabe M."/>
            <person name="Hiraoka S."/>
            <person name="Chiba Y."/>
            <person name="Ishida S."/>
            <person name="Ono Y."/>
            <person name="Takiguchi S."/>
            <person name="Watanabe S."/>
            <person name="Yosida M."/>
            <person name="Hotuta T."/>
            <person name="Kusano J."/>
            <person name="Kanehori K."/>
            <person name="Takahashi-Fujii A."/>
            <person name="Hara H."/>
            <person name="Tanase T.-O."/>
            <person name="Nomura Y."/>
            <person name="Togiya S."/>
            <person name="Komai F."/>
            <person name="Hara R."/>
            <person name="Takeuchi K."/>
            <person name="Arita M."/>
            <person name="Imose N."/>
            <person name="Musashino K."/>
            <person name="Yuuki H."/>
            <person name="Oshima A."/>
            <person name="Sasaki N."/>
            <person name="Aotsuka S."/>
            <person name="Yoshikawa Y."/>
            <person name="Matsunawa H."/>
            <person name="Ichihara T."/>
            <person name="Shiohata N."/>
            <person name="Sano S."/>
            <person name="Moriya S."/>
            <person name="Momiyama H."/>
            <person name="Satoh N."/>
            <person name="Takami S."/>
            <person name="Terashima Y."/>
            <person name="Suzuki O."/>
            <person name="Nakagawa S."/>
            <person name="Senoh A."/>
            <person name="Mizoguchi H."/>
            <person name="Goto Y."/>
            <person name="Shimizu F."/>
            <person name="Wakebe H."/>
            <person name="Hishigaki H."/>
            <person name="Watanabe T."/>
            <person name="Sugiyama A."/>
            <person name="Takemoto M."/>
            <person name="Kawakami B."/>
            <person name="Yamazaki M."/>
            <person name="Watanabe K."/>
            <person name="Kumagai A."/>
            <person name="Itakura S."/>
            <person name="Fukuzumi Y."/>
            <person name="Fujimori Y."/>
            <person name="Komiyama M."/>
            <person name="Tashiro H."/>
            <person name="Tanigami A."/>
            <person name="Fujiwara T."/>
            <person name="Ono T."/>
            <person name="Yamada K."/>
            <person name="Fujii Y."/>
            <person name="Ozaki K."/>
            <person name="Hirao M."/>
            <person name="Ohmori Y."/>
            <person name="Kawabata A."/>
            <person name="Hikiji T."/>
            <person name="Kobatake N."/>
            <person name="Inagaki H."/>
            <person name="Ikema Y."/>
            <person name="Okamoto S."/>
            <person name="Okitani R."/>
            <person name="Kawakami T."/>
            <person name="Noguchi S."/>
            <person name="Itoh T."/>
            <person name="Shigeta K."/>
            <person name="Senba T."/>
            <person name="Matsumura K."/>
            <person name="Nakajima Y."/>
            <person name="Mizuno T."/>
            <person name="Morinaga M."/>
            <person name="Sasaki M."/>
            <person name="Togashi T."/>
            <person name="Oyama M."/>
            <person name="Hata H."/>
            <person name="Watanabe M."/>
            <person name="Komatsu T."/>
            <person name="Mizushima-Sugano J."/>
            <person name="Satoh T."/>
            <person name="Shirai Y."/>
            <person name="Takahashi Y."/>
            <person name="Nakagawa K."/>
            <person name="Okumura K."/>
            <person name="Nagase T."/>
            <person name="Nomura N."/>
            <person name="Kikuchi H."/>
            <person name="Masuho Y."/>
            <person name="Yamashita R."/>
            <person name="Nakai K."/>
            <person name="Yada T."/>
            <person name="Nakamura Y."/>
            <person name="Ohara O."/>
            <person name="Isogai T."/>
            <person name="Sugano S."/>
        </authorList>
    </citation>
    <scope>NUCLEOTIDE SEQUENCE [LARGE SCALE MRNA]</scope>
    <scope>VARIANT SER-310</scope>
</reference>
<reference key="6">
    <citation type="journal article" date="2004" name="Genome Res.">
        <title>The status, quality, and expansion of the NIH full-length cDNA project: the Mammalian Gene Collection (MGC).</title>
        <authorList>
            <consortium name="The MGC Project Team"/>
        </authorList>
    </citation>
    <scope>NUCLEOTIDE SEQUENCE [LARGE SCALE MRNA]</scope>
    <scope>VARIANT SER-310</scope>
    <source>
        <tissue>Prostate</tissue>
    </source>
</reference>
<reference key="7">
    <citation type="journal article" date="2004" name="Protein Sci.">
        <title>Signal peptide prediction based on analysis of experimentally verified cleavage sites.</title>
        <authorList>
            <person name="Zhang Z."/>
            <person name="Henzel W.J."/>
        </authorList>
    </citation>
    <scope>PROTEIN SEQUENCE OF 56-70</scope>
</reference>
<sequence length="386" mass="41849">MGLWGQSVPTASSARAGRYPGARTASGTRPWLLDPKILKFVVFIVAVLLPVRVDSATIPRQDEVPQQTVAPQQQRRSLKEEECPAGSHRSEYTGACNPCTEGVDYTIASNNLPSCLLCTVCKSGQTNKSSCTTTRDTVCQCEKGSFQDKNSPEMCRTCRTGCPRGMVKVSNCTPRSDIKCKNESAASSTGKTPAAEETVTTILGMLASPYHYLIIIVVLVIILAVVVVGFSCRKKFISYLKGICSGGGGGPERVHRVLFRRRSCPSRVPGAEDNARNETLSNRYLQPTQVSEQEIQGQELAELTGVTVELPEEPQRLLEQAEAEGCQRRRLLVPVNDADSADISTLLDASATLEEGHAKETIQDQLVGSEKLFYEEDEAGSATSCL</sequence>
<accession>Q9UBN6</accession>
<accession>B2R8W0</accession>
<accession>Q9Y6Q4</accession>
<protein>
    <recommendedName>
        <fullName>Tumor necrosis factor receptor superfamily member 10D</fullName>
    </recommendedName>
    <alternativeName>
        <fullName>Decoy receptor 2</fullName>
        <shortName>DcR2</shortName>
    </alternativeName>
    <alternativeName>
        <fullName>TNF-related apoptosis-inducing ligand receptor 4</fullName>
        <shortName>TRAIL receptor 4</shortName>
        <shortName evidence="11">TRAIL-R4</shortName>
    </alternativeName>
    <alternativeName>
        <fullName>TRAIL receptor with a truncated death domain</fullName>
    </alternativeName>
    <cdAntigenName>CD264</cdAntigenName>
</protein>
<evidence type="ECO:0000255" key="1"/>
<evidence type="ECO:0000255" key="2">
    <source>
        <dbReference type="PROSITE-ProRule" id="PRU00206"/>
    </source>
</evidence>
<evidence type="ECO:0000256" key="3">
    <source>
        <dbReference type="SAM" id="MobiDB-lite"/>
    </source>
</evidence>
<evidence type="ECO:0000269" key="4">
    <source>
    </source>
</evidence>
<evidence type="ECO:0000269" key="5">
    <source>
    </source>
</evidence>
<evidence type="ECO:0000269" key="6">
    <source>
    </source>
</evidence>
<evidence type="ECO:0000269" key="7">
    <source>
    </source>
</evidence>
<evidence type="ECO:0000269" key="8">
    <source>
    </source>
</evidence>
<evidence type="ECO:0000269" key="9">
    <source>
    </source>
</evidence>
<evidence type="ECO:0000269" key="10">
    <source>
    </source>
</evidence>
<evidence type="ECO:0000303" key="11">
    <source>
    </source>
</evidence>
<evidence type="ECO:0000303" key="12">
    <source>
    </source>
</evidence>
<evidence type="ECO:0000312" key="13">
    <source>
        <dbReference type="HGNC" id="HGNC:11907"/>
    </source>
</evidence>